<evidence type="ECO:0000250" key="1"/>
<evidence type="ECO:0000255" key="2">
    <source>
        <dbReference type="HAMAP-Rule" id="MF_01540"/>
    </source>
</evidence>
<reference key="1">
    <citation type="journal article" date="2002" name="Nucleic Acids Res.">
        <title>Genome sequence of Shigella flexneri 2a: insights into pathogenicity through comparison with genomes of Escherichia coli K12 and O157.</title>
        <authorList>
            <person name="Jin Q."/>
            <person name="Yuan Z."/>
            <person name="Xu J."/>
            <person name="Wang Y."/>
            <person name="Shen Y."/>
            <person name="Lu W."/>
            <person name="Wang J."/>
            <person name="Liu H."/>
            <person name="Yang J."/>
            <person name="Yang F."/>
            <person name="Zhang X."/>
            <person name="Zhang J."/>
            <person name="Yang G."/>
            <person name="Wu H."/>
            <person name="Qu D."/>
            <person name="Dong J."/>
            <person name="Sun L."/>
            <person name="Xue Y."/>
            <person name="Zhao A."/>
            <person name="Gao Y."/>
            <person name="Zhu J."/>
            <person name="Kan B."/>
            <person name="Ding K."/>
            <person name="Chen S."/>
            <person name="Cheng H."/>
            <person name="Yao Z."/>
            <person name="He B."/>
            <person name="Chen R."/>
            <person name="Ma D."/>
            <person name="Qiang B."/>
            <person name="Wen Y."/>
            <person name="Hou Y."/>
            <person name="Yu J."/>
        </authorList>
    </citation>
    <scope>NUCLEOTIDE SEQUENCE [LARGE SCALE GENOMIC DNA]</scope>
    <source>
        <strain>301 / Serotype 2a</strain>
    </source>
</reference>
<reference key="2">
    <citation type="journal article" date="2003" name="Infect. Immun.">
        <title>Complete genome sequence and comparative genomics of Shigella flexneri serotype 2a strain 2457T.</title>
        <authorList>
            <person name="Wei J."/>
            <person name="Goldberg M.B."/>
            <person name="Burland V."/>
            <person name="Venkatesan M.M."/>
            <person name="Deng W."/>
            <person name="Fournier G."/>
            <person name="Mayhew G.F."/>
            <person name="Plunkett G. III"/>
            <person name="Rose D.J."/>
            <person name="Darling A."/>
            <person name="Mau B."/>
            <person name="Perna N.T."/>
            <person name="Payne S.M."/>
            <person name="Runyen-Janecky L.J."/>
            <person name="Zhou S."/>
            <person name="Schwartz D.C."/>
            <person name="Blattner F.R."/>
        </authorList>
    </citation>
    <scope>NUCLEOTIDE SEQUENCE [LARGE SCALE GENOMIC DNA]</scope>
    <source>
        <strain>ATCC 700930 / 2457T / Serotype 2a</strain>
    </source>
</reference>
<protein>
    <recommendedName>
        <fullName evidence="2">Sulfite reductase [NADPH] hemoprotein beta-component</fullName>
        <shortName evidence="2">SiR-HP</shortName>
        <shortName evidence="2">SiRHP</shortName>
        <ecNumber evidence="2">1.8.1.2</ecNumber>
    </recommendedName>
</protein>
<keyword id="KW-0004">4Fe-4S</keyword>
<keyword id="KW-0028">Amino-acid biosynthesis</keyword>
<keyword id="KW-0198">Cysteine biosynthesis</keyword>
<keyword id="KW-0349">Heme</keyword>
<keyword id="KW-0408">Iron</keyword>
<keyword id="KW-0411">Iron-sulfur</keyword>
<keyword id="KW-0479">Metal-binding</keyword>
<keyword id="KW-0521">NADP</keyword>
<keyword id="KW-0560">Oxidoreductase</keyword>
<keyword id="KW-1185">Reference proteome</keyword>
<gene>
    <name evidence="2" type="primary">cysI</name>
    <name type="ordered locus">SF2779</name>
    <name type="ordered locus">S2972</name>
</gene>
<feature type="initiator methionine" description="Removed" evidence="1">
    <location>
        <position position="1"/>
    </location>
</feature>
<feature type="chain" id="PRO_0000199910" description="Sulfite reductase [NADPH] hemoprotein beta-component">
    <location>
        <begin position="2"/>
        <end position="570"/>
    </location>
</feature>
<feature type="binding site" evidence="2">
    <location>
        <position position="434"/>
    </location>
    <ligand>
        <name>[4Fe-4S] cluster</name>
        <dbReference type="ChEBI" id="CHEBI:49883"/>
    </ligand>
</feature>
<feature type="binding site" evidence="2">
    <location>
        <position position="440"/>
    </location>
    <ligand>
        <name>[4Fe-4S] cluster</name>
        <dbReference type="ChEBI" id="CHEBI:49883"/>
    </ligand>
</feature>
<feature type="binding site" evidence="2">
    <location>
        <position position="479"/>
    </location>
    <ligand>
        <name>[4Fe-4S] cluster</name>
        <dbReference type="ChEBI" id="CHEBI:49883"/>
    </ligand>
</feature>
<feature type="binding site" evidence="2">
    <location>
        <position position="483"/>
    </location>
    <ligand>
        <name>[4Fe-4S] cluster</name>
        <dbReference type="ChEBI" id="CHEBI:49883"/>
    </ligand>
</feature>
<feature type="binding site" description="axial binding residue" evidence="2">
    <location>
        <position position="483"/>
    </location>
    <ligand>
        <name>siroheme</name>
        <dbReference type="ChEBI" id="CHEBI:60052"/>
    </ligand>
    <ligandPart>
        <name>Fe</name>
        <dbReference type="ChEBI" id="CHEBI:18248"/>
    </ligandPart>
</feature>
<comment type="function">
    <text evidence="2">Component of the sulfite reductase complex that catalyzes the 6-electron reduction of sulfite to sulfide. This is one of several activities required for the biosynthesis of L-cysteine from sulfate.</text>
</comment>
<comment type="catalytic activity">
    <reaction evidence="2">
        <text>hydrogen sulfide + 3 NADP(+) + 3 H2O = sulfite + 3 NADPH + 4 H(+)</text>
        <dbReference type="Rhea" id="RHEA:13801"/>
        <dbReference type="ChEBI" id="CHEBI:15377"/>
        <dbReference type="ChEBI" id="CHEBI:15378"/>
        <dbReference type="ChEBI" id="CHEBI:17359"/>
        <dbReference type="ChEBI" id="CHEBI:29919"/>
        <dbReference type="ChEBI" id="CHEBI:57783"/>
        <dbReference type="ChEBI" id="CHEBI:58349"/>
        <dbReference type="EC" id="1.8.1.2"/>
    </reaction>
</comment>
<comment type="cofactor">
    <cofactor evidence="2">
        <name>siroheme</name>
        <dbReference type="ChEBI" id="CHEBI:60052"/>
    </cofactor>
    <text evidence="2">Binds 1 siroheme per subunit.</text>
</comment>
<comment type="cofactor">
    <cofactor evidence="2">
        <name>[4Fe-4S] cluster</name>
        <dbReference type="ChEBI" id="CHEBI:49883"/>
    </cofactor>
    <text evidence="2">Binds 1 [4Fe-4S] cluster per subunit.</text>
</comment>
<comment type="pathway">
    <text evidence="2">Sulfur metabolism; hydrogen sulfide biosynthesis; hydrogen sulfide from sulfite (NADPH route): step 1/1.</text>
</comment>
<comment type="subunit">
    <text evidence="2">Alpha(8)-beta(8). The alpha component is a flavoprotein, the beta component is a hemoprotein.</text>
</comment>
<comment type="similarity">
    <text evidence="2">Belongs to the nitrite and sulfite reductase 4Fe-4S domain family.</text>
</comment>
<organism>
    <name type="scientific">Shigella flexneri</name>
    <dbReference type="NCBI Taxonomy" id="623"/>
    <lineage>
        <taxon>Bacteria</taxon>
        <taxon>Pseudomonadati</taxon>
        <taxon>Pseudomonadota</taxon>
        <taxon>Gammaproteobacteria</taxon>
        <taxon>Enterobacterales</taxon>
        <taxon>Enterobacteriaceae</taxon>
        <taxon>Shigella</taxon>
    </lineage>
</organism>
<proteinExistence type="inferred from homology"/>
<accession>Q83QE0</accession>
<accession>Q7C088</accession>
<name>CYSI_SHIFL</name>
<sequence>MSEKHPGPLVVEGKLTDAERMKLESNYLRGTIAEDLNDGLTGGFKGDNFLLIRFHGMYQQDDRDIRAERAEQKLEPRHAMLLRCRLPGGVITTKQWQAIDKFAGENTIYGSIRLTNRQTFQFHGILKKNVKPVHQMLHSVGLDALATANDMNRNVLCTSNPYESQLHAEAYEWAKKISEHLLPRTRAYAEIWLDQEKVATTDEEPILGQTYLPRKFKTTVVIPPQNDIDLHANDMNFVAIAENGKLVGFNLLVGGGLSIEHGNKKTYARTASEFGYLPLEHTLAVAEAVVTTQRDWGNRTDRKNAKTKYTLERVGVETFKAEVERRAGIKFEPIRPYEFTGRGDRIGWVKGIDDNWHLTLFIENGRILDYPGRPLKTGLLEIAKIHKGDFRITANQNLIIAGVPESEKAKIEKIAKESGLMNAVTPQRENSMACVSFPTCPLAMAEAERFLPSFIDNIDNLMVKHGVSDEHIVMRVTGCPNGCGRAMLAEVGLVGKAPGRYNLHLGGNRIGTRIPRMYKENITEPEILASLDELIGRWAKEREAGEGFGDFTVRAGIIRPVLDPARDLWD</sequence>
<dbReference type="EC" id="1.8.1.2" evidence="2"/>
<dbReference type="EMBL" id="AE005674">
    <property type="protein sequence ID" value="AAN44268.1"/>
    <property type="molecule type" value="Genomic_DNA"/>
</dbReference>
<dbReference type="EMBL" id="AE014073">
    <property type="protein sequence ID" value="AAP18093.1"/>
    <property type="molecule type" value="Genomic_DNA"/>
</dbReference>
<dbReference type="RefSeq" id="NP_708561.1">
    <property type="nucleotide sequence ID" value="NC_004337.2"/>
</dbReference>
<dbReference type="RefSeq" id="WP_001290713.1">
    <property type="nucleotide sequence ID" value="NZ_WPGW01000039.1"/>
</dbReference>
<dbReference type="SMR" id="Q83QE0"/>
<dbReference type="STRING" id="198214.SF2779"/>
<dbReference type="PaxDb" id="198214-SF2779"/>
<dbReference type="GeneID" id="1027406"/>
<dbReference type="KEGG" id="sfl:SF2779"/>
<dbReference type="KEGG" id="sfx:S2972"/>
<dbReference type="PATRIC" id="fig|198214.7.peg.3307"/>
<dbReference type="HOGENOM" id="CLU_001975_3_2_6"/>
<dbReference type="UniPathway" id="UPA00140">
    <property type="reaction ID" value="UER00207"/>
</dbReference>
<dbReference type="Proteomes" id="UP000001006">
    <property type="component" value="Chromosome"/>
</dbReference>
<dbReference type="Proteomes" id="UP000002673">
    <property type="component" value="Chromosome"/>
</dbReference>
<dbReference type="GO" id="GO:0009337">
    <property type="term" value="C:sulfite reductase complex (NADPH)"/>
    <property type="evidence" value="ECO:0007669"/>
    <property type="project" value="InterPro"/>
</dbReference>
<dbReference type="GO" id="GO:0051539">
    <property type="term" value="F:4 iron, 4 sulfur cluster binding"/>
    <property type="evidence" value="ECO:0007669"/>
    <property type="project" value="UniProtKB-KW"/>
</dbReference>
<dbReference type="GO" id="GO:0020037">
    <property type="term" value="F:heme binding"/>
    <property type="evidence" value="ECO:0007669"/>
    <property type="project" value="InterPro"/>
</dbReference>
<dbReference type="GO" id="GO:0046872">
    <property type="term" value="F:metal ion binding"/>
    <property type="evidence" value="ECO:0007669"/>
    <property type="project" value="UniProtKB-KW"/>
</dbReference>
<dbReference type="GO" id="GO:0050661">
    <property type="term" value="F:NADP binding"/>
    <property type="evidence" value="ECO:0007669"/>
    <property type="project" value="InterPro"/>
</dbReference>
<dbReference type="GO" id="GO:0050311">
    <property type="term" value="F:sulfite reductase (ferredoxin) activity"/>
    <property type="evidence" value="ECO:0007669"/>
    <property type="project" value="TreeGrafter"/>
</dbReference>
<dbReference type="GO" id="GO:0004783">
    <property type="term" value="F:sulfite reductase (NADPH) activity"/>
    <property type="evidence" value="ECO:0007669"/>
    <property type="project" value="UniProtKB-UniRule"/>
</dbReference>
<dbReference type="GO" id="GO:0019344">
    <property type="term" value="P:cysteine biosynthetic process"/>
    <property type="evidence" value="ECO:0007669"/>
    <property type="project" value="UniProtKB-KW"/>
</dbReference>
<dbReference type="GO" id="GO:0070814">
    <property type="term" value="P:hydrogen sulfide biosynthetic process"/>
    <property type="evidence" value="ECO:0007669"/>
    <property type="project" value="UniProtKB-UniRule"/>
</dbReference>
<dbReference type="GO" id="GO:0000103">
    <property type="term" value="P:sulfate assimilation"/>
    <property type="evidence" value="ECO:0007669"/>
    <property type="project" value="UniProtKB-UniRule"/>
</dbReference>
<dbReference type="FunFam" id="3.30.413.10:FF:000003">
    <property type="entry name" value="Sulfite reductase [NADPH] hemoprotein beta-component"/>
    <property type="match status" value="1"/>
</dbReference>
<dbReference type="FunFam" id="3.30.413.10:FF:000004">
    <property type="entry name" value="Sulfite reductase [NADPH] hemoprotein beta-component"/>
    <property type="match status" value="1"/>
</dbReference>
<dbReference type="Gene3D" id="3.30.413.10">
    <property type="entry name" value="Sulfite Reductase Hemoprotein, domain 1"/>
    <property type="match status" value="2"/>
</dbReference>
<dbReference type="HAMAP" id="MF_01540">
    <property type="entry name" value="CysI"/>
    <property type="match status" value="1"/>
</dbReference>
<dbReference type="InterPro" id="IPR011786">
    <property type="entry name" value="CysI"/>
</dbReference>
<dbReference type="InterPro" id="IPR005117">
    <property type="entry name" value="NiRdtase/SiRdtase_haem-b_fer"/>
</dbReference>
<dbReference type="InterPro" id="IPR036136">
    <property type="entry name" value="Nit/Sulf_reduc_fer-like_dom_sf"/>
</dbReference>
<dbReference type="InterPro" id="IPR006067">
    <property type="entry name" value="NO2/SO3_Rdtase_4Fe4S_dom"/>
</dbReference>
<dbReference type="InterPro" id="IPR045169">
    <property type="entry name" value="NO2/SO3_Rdtase_4Fe4S_prot"/>
</dbReference>
<dbReference type="InterPro" id="IPR045854">
    <property type="entry name" value="NO2/SO3_Rdtase_4Fe4S_sf"/>
</dbReference>
<dbReference type="InterPro" id="IPR006066">
    <property type="entry name" value="NO2/SO3_Rdtase_FeS/sirohaem_BS"/>
</dbReference>
<dbReference type="NCBIfam" id="TIGR02041">
    <property type="entry name" value="CysI"/>
    <property type="match status" value="1"/>
</dbReference>
<dbReference type="NCBIfam" id="NF010029">
    <property type="entry name" value="PRK13504.1"/>
    <property type="match status" value="1"/>
</dbReference>
<dbReference type="PANTHER" id="PTHR11493:SF47">
    <property type="entry name" value="SULFITE REDUCTASE [NADPH] SUBUNIT BETA"/>
    <property type="match status" value="1"/>
</dbReference>
<dbReference type="PANTHER" id="PTHR11493">
    <property type="entry name" value="SULFITE REDUCTASE [NADPH] SUBUNIT BETA-RELATED"/>
    <property type="match status" value="1"/>
</dbReference>
<dbReference type="Pfam" id="PF01077">
    <property type="entry name" value="NIR_SIR"/>
    <property type="match status" value="1"/>
</dbReference>
<dbReference type="Pfam" id="PF03460">
    <property type="entry name" value="NIR_SIR_ferr"/>
    <property type="match status" value="2"/>
</dbReference>
<dbReference type="PRINTS" id="PR00397">
    <property type="entry name" value="SIROHAEM"/>
</dbReference>
<dbReference type="SUPFAM" id="SSF56014">
    <property type="entry name" value="Nitrite and sulphite reductase 4Fe-4S domain-like"/>
    <property type="match status" value="2"/>
</dbReference>
<dbReference type="SUPFAM" id="SSF55124">
    <property type="entry name" value="Nitrite/Sulfite reductase N-terminal domain-like"/>
    <property type="match status" value="2"/>
</dbReference>
<dbReference type="PROSITE" id="PS00365">
    <property type="entry name" value="NIR_SIR"/>
    <property type="match status" value="1"/>
</dbReference>